<keyword id="KW-1185">Reference proteome</keyword>
<protein>
    <recommendedName>
        <fullName>Uncharacterized protein ORF208</fullName>
    </recommendedName>
</protein>
<proteinExistence type="predicted"/>
<reference key="1">
    <citation type="journal article" date="2005" name="J. Bacteriol.">
        <title>Structure and genome organization of AFV2, a novel archaeal lipothrixvirus with unusual terminal and core structures.</title>
        <authorList>
            <person name="Haring M."/>
            <person name="Vestergaard G."/>
            <person name="Brugger K."/>
            <person name="Rachel R."/>
            <person name="Garrett R.A."/>
            <person name="Prangishvili D."/>
        </authorList>
    </citation>
    <scope>NUCLEOTIDE SEQUENCE [GENOMIC DNA]</scope>
</reference>
<organismHost>
    <name type="scientific">Acidianus sp. F28</name>
    <dbReference type="NCBI Taxonomy" id="315458"/>
</organismHost>
<organism>
    <name type="scientific">Acidianus filamentous virus 2 (isolate Italy/Pozzuoli)</name>
    <name type="common">AFV-2</name>
    <dbReference type="NCBI Taxonomy" id="654910"/>
    <lineage>
        <taxon>Viruses</taxon>
        <taxon>Adnaviria</taxon>
        <taxon>Zilligvirae</taxon>
        <taxon>Taleaviricota</taxon>
        <taxon>Tokiviricetes</taxon>
        <taxon>Ligamenvirales</taxon>
        <taxon>Lipothrixviridae</taxon>
        <taxon>Deltalipothrixvirus</taxon>
        <taxon>Acidianus filamentous virus 2</taxon>
    </lineage>
</organism>
<feature type="chain" id="PRO_0000384518" description="Uncharacterized protein ORF208">
    <location>
        <begin position="1"/>
        <end position="208"/>
    </location>
</feature>
<sequence>MKVVTFGGHFHHFREIYDVLHHDVVIVDDNHLDGVTENTFDNVNITHYKTNVDDNKNVSIAKTLIYIYSTVNDDVIVLDSDVYVPIRDKPLPNSPTIFCIPAVNWGNKKYVLYCDSTNVFVPRLYLNPLVDMLELYLKGDIDMPIDTYQSRYTIAFNKIVVPGTFHYLPSSPGDYANTKKWVVTSDDILSVNIANTWYSMLPCDYVLK</sequence>
<dbReference type="EMBL" id="AJ854042">
    <property type="protein sequence ID" value="CAH69435.1"/>
    <property type="molecule type" value="Genomic_DNA"/>
</dbReference>
<dbReference type="RefSeq" id="YP_001496973.1">
    <property type="nucleotide sequence ID" value="NC_009884.1"/>
</dbReference>
<dbReference type="KEGG" id="vg:5656058"/>
<dbReference type="Proteomes" id="UP000006364">
    <property type="component" value="Genome"/>
</dbReference>
<accession>Q573C1</accession>
<gene>
    <name type="ORF">ORF208</name>
</gene>
<name>Y208_AFV2P</name>